<gene>
    <name evidence="1" type="primary">folD</name>
    <name type="ordered locus">Desal_3423</name>
</gene>
<dbReference type="EC" id="1.5.1.5" evidence="1"/>
<dbReference type="EC" id="3.5.4.9" evidence="1"/>
<dbReference type="EMBL" id="CP001649">
    <property type="protein sequence ID" value="ACS81472.1"/>
    <property type="molecule type" value="Genomic_DNA"/>
</dbReference>
<dbReference type="RefSeq" id="WP_015853288.1">
    <property type="nucleotide sequence ID" value="NC_012881.1"/>
</dbReference>
<dbReference type="SMR" id="C6BSL6"/>
<dbReference type="STRING" id="526222.Desal_3423"/>
<dbReference type="KEGG" id="dsa:Desal_3423"/>
<dbReference type="eggNOG" id="COG0190">
    <property type="taxonomic scope" value="Bacteria"/>
</dbReference>
<dbReference type="HOGENOM" id="CLU_034045_2_1_7"/>
<dbReference type="OrthoDB" id="9803580at2"/>
<dbReference type="UniPathway" id="UPA00193"/>
<dbReference type="Proteomes" id="UP000002601">
    <property type="component" value="Chromosome"/>
</dbReference>
<dbReference type="GO" id="GO:0005829">
    <property type="term" value="C:cytosol"/>
    <property type="evidence" value="ECO:0007669"/>
    <property type="project" value="TreeGrafter"/>
</dbReference>
<dbReference type="GO" id="GO:0004477">
    <property type="term" value="F:methenyltetrahydrofolate cyclohydrolase activity"/>
    <property type="evidence" value="ECO:0007669"/>
    <property type="project" value="UniProtKB-UniRule"/>
</dbReference>
<dbReference type="GO" id="GO:0004488">
    <property type="term" value="F:methylenetetrahydrofolate dehydrogenase (NADP+) activity"/>
    <property type="evidence" value="ECO:0007669"/>
    <property type="project" value="UniProtKB-UniRule"/>
</dbReference>
<dbReference type="GO" id="GO:0000105">
    <property type="term" value="P:L-histidine biosynthetic process"/>
    <property type="evidence" value="ECO:0007669"/>
    <property type="project" value="UniProtKB-KW"/>
</dbReference>
<dbReference type="GO" id="GO:0009086">
    <property type="term" value="P:methionine biosynthetic process"/>
    <property type="evidence" value="ECO:0007669"/>
    <property type="project" value="UniProtKB-KW"/>
</dbReference>
<dbReference type="GO" id="GO:0006164">
    <property type="term" value="P:purine nucleotide biosynthetic process"/>
    <property type="evidence" value="ECO:0007669"/>
    <property type="project" value="UniProtKB-KW"/>
</dbReference>
<dbReference type="GO" id="GO:0035999">
    <property type="term" value="P:tetrahydrofolate interconversion"/>
    <property type="evidence" value="ECO:0007669"/>
    <property type="project" value="UniProtKB-UniRule"/>
</dbReference>
<dbReference type="CDD" id="cd01080">
    <property type="entry name" value="NAD_bind_m-THF_DH_Cyclohyd"/>
    <property type="match status" value="1"/>
</dbReference>
<dbReference type="FunFam" id="3.40.50.720:FF:000094">
    <property type="entry name" value="Bifunctional protein FolD"/>
    <property type="match status" value="1"/>
</dbReference>
<dbReference type="FunFam" id="3.40.50.10860:FF:000005">
    <property type="entry name" value="C-1-tetrahydrofolate synthase, cytoplasmic, putative"/>
    <property type="match status" value="1"/>
</dbReference>
<dbReference type="Gene3D" id="3.40.50.10860">
    <property type="entry name" value="Leucine Dehydrogenase, chain A, domain 1"/>
    <property type="match status" value="1"/>
</dbReference>
<dbReference type="Gene3D" id="3.40.50.720">
    <property type="entry name" value="NAD(P)-binding Rossmann-like Domain"/>
    <property type="match status" value="1"/>
</dbReference>
<dbReference type="HAMAP" id="MF_01576">
    <property type="entry name" value="THF_DHG_CYH"/>
    <property type="match status" value="1"/>
</dbReference>
<dbReference type="InterPro" id="IPR046346">
    <property type="entry name" value="Aminoacid_DH-like_N_sf"/>
</dbReference>
<dbReference type="InterPro" id="IPR036291">
    <property type="entry name" value="NAD(P)-bd_dom_sf"/>
</dbReference>
<dbReference type="InterPro" id="IPR000672">
    <property type="entry name" value="THF_DH/CycHdrlase"/>
</dbReference>
<dbReference type="InterPro" id="IPR020630">
    <property type="entry name" value="THF_DH/CycHdrlase_cat_dom"/>
</dbReference>
<dbReference type="InterPro" id="IPR020867">
    <property type="entry name" value="THF_DH/CycHdrlase_CS"/>
</dbReference>
<dbReference type="InterPro" id="IPR020631">
    <property type="entry name" value="THF_DH/CycHdrlase_NAD-bd_dom"/>
</dbReference>
<dbReference type="NCBIfam" id="NF008058">
    <property type="entry name" value="PRK10792.1"/>
    <property type="match status" value="1"/>
</dbReference>
<dbReference type="NCBIfam" id="NF010781">
    <property type="entry name" value="PRK14184.1"/>
    <property type="match status" value="1"/>
</dbReference>
<dbReference type="NCBIfam" id="NF010783">
    <property type="entry name" value="PRK14186.1"/>
    <property type="match status" value="1"/>
</dbReference>
<dbReference type="PANTHER" id="PTHR48099:SF5">
    <property type="entry name" value="C-1-TETRAHYDROFOLATE SYNTHASE, CYTOPLASMIC"/>
    <property type="match status" value="1"/>
</dbReference>
<dbReference type="PANTHER" id="PTHR48099">
    <property type="entry name" value="C-1-TETRAHYDROFOLATE SYNTHASE, CYTOPLASMIC-RELATED"/>
    <property type="match status" value="1"/>
</dbReference>
<dbReference type="Pfam" id="PF00763">
    <property type="entry name" value="THF_DHG_CYH"/>
    <property type="match status" value="1"/>
</dbReference>
<dbReference type="Pfam" id="PF02882">
    <property type="entry name" value="THF_DHG_CYH_C"/>
    <property type="match status" value="1"/>
</dbReference>
<dbReference type="PRINTS" id="PR00085">
    <property type="entry name" value="THFDHDRGNASE"/>
</dbReference>
<dbReference type="SUPFAM" id="SSF53223">
    <property type="entry name" value="Aminoacid dehydrogenase-like, N-terminal domain"/>
    <property type="match status" value="1"/>
</dbReference>
<dbReference type="SUPFAM" id="SSF51735">
    <property type="entry name" value="NAD(P)-binding Rossmann-fold domains"/>
    <property type="match status" value="1"/>
</dbReference>
<dbReference type="PROSITE" id="PS00767">
    <property type="entry name" value="THF_DHG_CYH_2"/>
    <property type="match status" value="1"/>
</dbReference>
<proteinExistence type="inferred from homology"/>
<keyword id="KW-0028">Amino-acid biosynthesis</keyword>
<keyword id="KW-0368">Histidine biosynthesis</keyword>
<keyword id="KW-0378">Hydrolase</keyword>
<keyword id="KW-0486">Methionine biosynthesis</keyword>
<keyword id="KW-0511">Multifunctional enzyme</keyword>
<keyword id="KW-0521">NADP</keyword>
<keyword id="KW-0554">One-carbon metabolism</keyword>
<keyword id="KW-0560">Oxidoreductase</keyword>
<keyword id="KW-0658">Purine biosynthesis</keyword>
<keyword id="KW-1185">Reference proteome</keyword>
<accession>C6BSL6</accession>
<reference key="1">
    <citation type="submission" date="2009-06" db="EMBL/GenBank/DDBJ databases">
        <title>Complete sequence of Desulfovibrio salexigens DSM 2638.</title>
        <authorList>
            <consortium name="US DOE Joint Genome Institute"/>
            <person name="Lucas S."/>
            <person name="Copeland A."/>
            <person name="Lapidus A."/>
            <person name="Glavina del Rio T."/>
            <person name="Tice H."/>
            <person name="Bruce D."/>
            <person name="Goodwin L."/>
            <person name="Pitluck S."/>
            <person name="Munk A.C."/>
            <person name="Brettin T."/>
            <person name="Detter J.C."/>
            <person name="Han C."/>
            <person name="Tapia R."/>
            <person name="Larimer F."/>
            <person name="Land M."/>
            <person name="Hauser L."/>
            <person name="Kyrpides N."/>
            <person name="Anderson I."/>
            <person name="Wall J.D."/>
            <person name="Arkin A.P."/>
            <person name="Dehal P."/>
            <person name="Chivian D."/>
            <person name="Giles B."/>
            <person name="Hazen T.C."/>
        </authorList>
    </citation>
    <scope>NUCLEOTIDE SEQUENCE [LARGE SCALE GENOMIC DNA]</scope>
    <source>
        <strain>ATCC 14822 / DSM 2638 / NCIMB 8403 / VKM B-1763</strain>
    </source>
</reference>
<comment type="function">
    <text evidence="1">Catalyzes the oxidation of 5,10-methylenetetrahydrofolate to 5,10-methenyltetrahydrofolate and then the hydrolysis of 5,10-methenyltetrahydrofolate to 10-formyltetrahydrofolate.</text>
</comment>
<comment type="catalytic activity">
    <reaction evidence="1">
        <text>(6R)-5,10-methylene-5,6,7,8-tetrahydrofolate + NADP(+) = (6R)-5,10-methenyltetrahydrofolate + NADPH</text>
        <dbReference type="Rhea" id="RHEA:22812"/>
        <dbReference type="ChEBI" id="CHEBI:15636"/>
        <dbReference type="ChEBI" id="CHEBI:57455"/>
        <dbReference type="ChEBI" id="CHEBI:57783"/>
        <dbReference type="ChEBI" id="CHEBI:58349"/>
        <dbReference type="EC" id="1.5.1.5"/>
    </reaction>
</comment>
<comment type="catalytic activity">
    <reaction evidence="1">
        <text>(6R)-5,10-methenyltetrahydrofolate + H2O = (6R)-10-formyltetrahydrofolate + H(+)</text>
        <dbReference type="Rhea" id="RHEA:23700"/>
        <dbReference type="ChEBI" id="CHEBI:15377"/>
        <dbReference type="ChEBI" id="CHEBI:15378"/>
        <dbReference type="ChEBI" id="CHEBI:57455"/>
        <dbReference type="ChEBI" id="CHEBI:195366"/>
        <dbReference type="EC" id="3.5.4.9"/>
    </reaction>
</comment>
<comment type="pathway">
    <text evidence="1">One-carbon metabolism; tetrahydrofolate interconversion.</text>
</comment>
<comment type="subunit">
    <text evidence="1">Homodimer.</text>
</comment>
<comment type="similarity">
    <text evidence="1">Belongs to the tetrahydrofolate dehydrogenase/cyclohydrolase family.</text>
</comment>
<feature type="chain" id="PRO_1000215592" description="Bifunctional protein FolD">
    <location>
        <begin position="1"/>
        <end position="286"/>
    </location>
</feature>
<feature type="binding site" evidence="1">
    <location>
        <begin position="164"/>
        <end position="166"/>
    </location>
    <ligand>
        <name>NADP(+)</name>
        <dbReference type="ChEBI" id="CHEBI:58349"/>
    </ligand>
</feature>
<feature type="binding site" evidence="1">
    <location>
        <position position="193"/>
    </location>
    <ligand>
        <name>NADP(+)</name>
        <dbReference type="ChEBI" id="CHEBI:58349"/>
    </ligand>
</feature>
<feature type="binding site" evidence="1">
    <location>
        <position position="234"/>
    </location>
    <ligand>
        <name>NADP(+)</name>
        <dbReference type="ChEBI" id="CHEBI:58349"/>
    </ligand>
</feature>
<organism>
    <name type="scientific">Maridesulfovibrio salexigens (strain ATCC 14822 / DSM 2638 / NCIMB 8403 / VKM B-1763)</name>
    <name type="common">Desulfovibrio salexigens</name>
    <dbReference type="NCBI Taxonomy" id="526222"/>
    <lineage>
        <taxon>Bacteria</taxon>
        <taxon>Pseudomonadati</taxon>
        <taxon>Thermodesulfobacteriota</taxon>
        <taxon>Desulfovibrionia</taxon>
        <taxon>Desulfovibrionales</taxon>
        <taxon>Desulfovibrionaceae</taxon>
        <taxon>Maridesulfovibrio</taxon>
    </lineage>
</organism>
<sequence length="286" mass="30527">MQILNGKETALTIREELKVEIDGLKEKHGRAPGLAVILVGEDPASQVYVRNKEIACEKAGIVSTAHRIDASVSQEELEALIQKLNADDTIDGILLQLPLPKGLDSQRCLELIDPGKDVDGFHPMNVGKLMLGLPGFRSCTPAGIITLLERYNLPTSGKKAVVVGRSNIVGKPLAMMLMQYGDFANATVTVCHSRTDNLAEEVKAADFVFAAIGIPKFIKKEMVKDGAVVVDVGINRTDEGLVGDCDYAALEDVASAMTPVPGGVGPMTIAQLLINTVQAYKEHVGA</sequence>
<protein>
    <recommendedName>
        <fullName evidence="1">Bifunctional protein FolD</fullName>
    </recommendedName>
    <domain>
        <recommendedName>
            <fullName evidence="1">Methylenetetrahydrofolate dehydrogenase</fullName>
            <ecNumber evidence="1">1.5.1.5</ecNumber>
        </recommendedName>
    </domain>
    <domain>
        <recommendedName>
            <fullName evidence="1">Methenyltetrahydrofolate cyclohydrolase</fullName>
            <ecNumber evidence="1">3.5.4.9</ecNumber>
        </recommendedName>
    </domain>
</protein>
<evidence type="ECO:0000255" key="1">
    <source>
        <dbReference type="HAMAP-Rule" id="MF_01576"/>
    </source>
</evidence>
<name>FOLD_MARSD</name>